<accession>P01839</accession>
<evidence type="ECO:0000255" key="1">
    <source>
        <dbReference type="PROSITE-ProRule" id="PRU00114"/>
    </source>
</evidence>
<evidence type="ECO:0000256" key="2">
    <source>
        <dbReference type="SAM" id="MobiDB-lite"/>
    </source>
</evidence>
<dbReference type="EMBL" id="V00885">
    <property type="status" value="NOT_ANNOTATED_CDS"/>
    <property type="molecule type" value="Genomic_DNA"/>
</dbReference>
<dbReference type="EMBL" id="X05800">
    <property type="protein sequence ID" value="CAA29246.1"/>
    <property type="molecule type" value="Genomic_DNA"/>
</dbReference>
<dbReference type="PIR" id="A02121">
    <property type="entry name" value="K4RBBS"/>
</dbReference>
<dbReference type="PIR" id="G20907">
    <property type="entry name" value="G20907"/>
</dbReference>
<dbReference type="SMR" id="P01839"/>
<dbReference type="FunCoup" id="P01839">
    <property type="interactions" value="58"/>
</dbReference>
<dbReference type="STRING" id="9986.ENSOCUP00000032029"/>
<dbReference type="PaxDb" id="9986-ENSOCUP00000019666"/>
<dbReference type="eggNOG" id="ENOG502RZ26">
    <property type="taxonomic scope" value="Eukaryota"/>
</dbReference>
<dbReference type="InParanoid" id="P01839"/>
<dbReference type="Proteomes" id="UP000001811">
    <property type="component" value="Unplaced"/>
</dbReference>
<dbReference type="CDD" id="cd07699">
    <property type="entry name" value="IgC1_L"/>
    <property type="match status" value="1"/>
</dbReference>
<dbReference type="FunFam" id="2.60.40.10:FF:000283">
    <property type="entry name" value="Immunoglobulin kappa constant"/>
    <property type="match status" value="1"/>
</dbReference>
<dbReference type="Gene3D" id="2.60.40.10">
    <property type="entry name" value="Immunoglobulins"/>
    <property type="match status" value="1"/>
</dbReference>
<dbReference type="InterPro" id="IPR007110">
    <property type="entry name" value="Ig-like_dom"/>
</dbReference>
<dbReference type="InterPro" id="IPR036179">
    <property type="entry name" value="Ig-like_dom_sf"/>
</dbReference>
<dbReference type="InterPro" id="IPR013783">
    <property type="entry name" value="Ig-like_fold"/>
</dbReference>
<dbReference type="InterPro" id="IPR003597">
    <property type="entry name" value="Ig_C1-set"/>
</dbReference>
<dbReference type="InterPro" id="IPR050380">
    <property type="entry name" value="Immune_Resp_Modulators"/>
</dbReference>
<dbReference type="PANTHER" id="PTHR23411">
    <property type="entry name" value="TAPASIN"/>
    <property type="match status" value="1"/>
</dbReference>
<dbReference type="Pfam" id="PF07654">
    <property type="entry name" value="C1-set"/>
    <property type="match status" value="1"/>
</dbReference>
<dbReference type="SMART" id="SM00407">
    <property type="entry name" value="IGc1"/>
    <property type="match status" value="1"/>
</dbReference>
<dbReference type="SUPFAM" id="SSF48726">
    <property type="entry name" value="Immunoglobulin"/>
    <property type="match status" value="1"/>
</dbReference>
<dbReference type="PROSITE" id="PS50835">
    <property type="entry name" value="IG_LIKE"/>
    <property type="match status" value="1"/>
</dbReference>
<name>KACB_RABIT</name>
<reference key="1">
    <citation type="journal article" date="1983" name="EMBO J.">
        <title>Multiplicity of constant kappa light chain genes in the rabbit genome: a b4b4 homozygous rabbit contains a kappa-bas gene.</title>
        <authorList>
            <person name="Heidmann O."/>
            <person name="Rougeon F."/>
        </authorList>
    </citation>
    <scope>NUCLEOTIDE SEQUENCE [GENOMIC DNA]</scope>
    <source>
        <strain>Basilea</strain>
    </source>
</reference>
<reference key="2">
    <citation type="journal article" date="1987" name="Nucleic Acids Res.">
        <title>Interallelic and intergenic conversion events could induce differential evolution of the two rabbit immunoglobulin kappa light chain genes.</title>
        <authorList>
            <person name="Mariame B."/>
            <person name="Akimenko M.-A."/>
            <person name="Rougeon F."/>
        </authorList>
    </citation>
    <scope>NUCLEOTIDE SEQUENCE [GENOMIC DNA]</scope>
</reference>
<sequence>GDPVAPSVLLFPPSKEELTTGTATIVCVANKFYPSDITVTWKVDGTTQQSGIENSKTPQSPEDNTYSLSSTLSLTSAQYNSHSVYTCEVVQGSASPIVQSFNRGDC</sequence>
<feature type="chain" id="PRO_0000153603" description="Ig kappa-b4 chain C region">
    <location>
        <begin position="1" status="less than"/>
        <end position="106"/>
    </location>
</feature>
<feature type="domain" description="Ig-like">
    <location>
        <begin position="6"/>
        <end position="99"/>
    </location>
</feature>
<feature type="region of interest" description="Disordered" evidence="2">
    <location>
        <begin position="48"/>
        <end position="67"/>
    </location>
</feature>
<feature type="compositionally biased region" description="Polar residues" evidence="2">
    <location>
        <begin position="48"/>
        <end position="64"/>
    </location>
</feature>
<feature type="disulfide bond" evidence="1">
    <location>
        <begin position="27"/>
        <end position="87"/>
    </location>
</feature>
<feature type="disulfide bond" description="Interchain (with a heavy chain)" evidence="1">
    <location>
        <position position="106"/>
    </location>
</feature>
<feature type="non-terminal residue">
    <location>
        <position position="1"/>
    </location>
</feature>
<organism>
    <name type="scientific">Oryctolagus cuniculus</name>
    <name type="common">Rabbit</name>
    <dbReference type="NCBI Taxonomy" id="9986"/>
    <lineage>
        <taxon>Eukaryota</taxon>
        <taxon>Metazoa</taxon>
        <taxon>Chordata</taxon>
        <taxon>Craniata</taxon>
        <taxon>Vertebrata</taxon>
        <taxon>Euteleostomi</taxon>
        <taxon>Mammalia</taxon>
        <taxon>Eutheria</taxon>
        <taxon>Euarchontoglires</taxon>
        <taxon>Glires</taxon>
        <taxon>Lagomorpha</taxon>
        <taxon>Leporidae</taxon>
        <taxon>Oryctolagus</taxon>
    </lineage>
</organism>
<comment type="miscellaneous">
    <text>In Basilea rabbits, the major type of light chain is lambda. The kappa chain shown is a minor component. All other rabbit B allotypes have 'Cys-64'.</text>
</comment>
<comment type="miscellaneous">
    <text>In rabbits two Ig kappa light chain genes are present, C kappa 1 and C kappa 2 or K-BAS.</text>
</comment>
<proteinExistence type="predicted"/>
<protein>
    <recommendedName>
        <fullName>Ig kappa-b4 chain C region</fullName>
    </recommendedName>
</protein>
<keyword id="KW-1015">Disulfide bond</keyword>
<keyword id="KW-0393">Immunoglobulin domain</keyword>
<keyword id="KW-1185">Reference proteome</keyword>
<gene>
    <name type="primary">K-BAS</name>
</gene>